<comment type="function">
    <text evidence="1">Bidirectionally degrades single-stranded DNA into large acid-insoluble oligonucleotides, which are then degraded further into small acid-soluble oligonucleotides.</text>
</comment>
<comment type="catalytic activity">
    <reaction evidence="1">
        <text>Exonucleolytic cleavage in either 5'- to 3'- or 3'- to 5'-direction to yield nucleoside 5'-phosphates.</text>
        <dbReference type="EC" id="3.1.11.6"/>
    </reaction>
</comment>
<comment type="subunit">
    <text evidence="1">Heterooligomer composed of large and small subunits.</text>
</comment>
<comment type="subcellular location">
    <subcellularLocation>
        <location evidence="1">Cytoplasm</location>
    </subcellularLocation>
</comment>
<comment type="similarity">
    <text evidence="1">Belongs to the XseB family.</text>
</comment>
<proteinExistence type="inferred from homology"/>
<keyword id="KW-0963">Cytoplasm</keyword>
<keyword id="KW-0269">Exonuclease</keyword>
<keyword id="KW-0378">Hydrolase</keyword>
<keyword id="KW-0540">Nuclease</keyword>
<feature type="chain" id="PRO_1000200239" description="Exodeoxyribonuclease 7 small subunit">
    <location>
        <begin position="1"/>
        <end position="83"/>
    </location>
</feature>
<reference key="1">
    <citation type="journal article" date="2009" name="J. Bacteriol.">
        <title>Genome sequences of three Agrobacterium biovars help elucidate the evolution of multichromosome genomes in bacteria.</title>
        <authorList>
            <person name="Slater S.C."/>
            <person name="Goldman B.S."/>
            <person name="Goodner B."/>
            <person name="Setubal J.C."/>
            <person name="Farrand S.K."/>
            <person name="Nester E.W."/>
            <person name="Burr T.J."/>
            <person name="Banta L."/>
            <person name="Dickerman A.W."/>
            <person name="Paulsen I."/>
            <person name="Otten L."/>
            <person name="Suen G."/>
            <person name="Welch R."/>
            <person name="Almeida N.F."/>
            <person name="Arnold F."/>
            <person name="Burton O.T."/>
            <person name="Du Z."/>
            <person name="Ewing A."/>
            <person name="Godsy E."/>
            <person name="Heisel S."/>
            <person name="Houmiel K.L."/>
            <person name="Jhaveri J."/>
            <person name="Lu J."/>
            <person name="Miller N.M."/>
            <person name="Norton S."/>
            <person name="Chen Q."/>
            <person name="Phoolcharoen W."/>
            <person name="Ohlin V."/>
            <person name="Ondrusek D."/>
            <person name="Pride N."/>
            <person name="Stricklin S.L."/>
            <person name="Sun J."/>
            <person name="Wheeler C."/>
            <person name="Wilson L."/>
            <person name="Zhu H."/>
            <person name="Wood D.W."/>
        </authorList>
    </citation>
    <scope>NUCLEOTIDE SEQUENCE [LARGE SCALE GENOMIC DNA]</scope>
    <source>
        <strain>K84 / ATCC BAA-868</strain>
    </source>
</reference>
<name>EX7S_RHIR8</name>
<organism>
    <name type="scientific">Rhizobium rhizogenes (strain K84 / ATCC BAA-868)</name>
    <name type="common">Agrobacterium radiobacter</name>
    <dbReference type="NCBI Taxonomy" id="311403"/>
    <lineage>
        <taxon>Bacteria</taxon>
        <taxon>Pseudomonadati</taxon>
        <taxon>Pseudomonadota</taxon>
        <taxon>Alphaproteobacteria</taxon>
        <taxon>Hyphomicrobiales</taxon>
        <taxon>Rhizobiaceae</taxon>
        <taxon>Rhizobium/Agrobacterium group</taxon>
        <taxon>Rhizobium</taxon>
    </lineage>
</organism>
<accession>B9JAL9</accession>
<sequence length="83" mass="9162">MSESAKLDVSDYSFEKAVAELESIVARLERGDVALDESIAIYERGEALKKHCETLLSAAENRIEKIRLDRAGKPQGTEPLDGQ</sequence>
<protein>
    <recommendedName>
        <fullName evidence="1">Exodeoxyribonuclease 7 small subunit</fullName>
        <ecNumber evidence="1">3.1.11.6</ecNumber>
    </recommendedName>
    <alternativeName>
        <fullName evidence="1">Exodeoxyribonuclease VII small subunit</fullName>
        <shortName evidence="1">Exonuclease VII small subunit</shortName>
    </alternativeName>
</protein>
<evidence type="ECO:0000255" key="1">
    <source>
        <dbReference type="HAMAP-Rule" id="MF_00337"/>
    </source>
</evidence>
<gene>
    <name evidence="1" type="primary">xseB</name>
    <name type="ordered locus">Arad_1202</name>
</gene>
<dbReference type="EC" id="3.1.11.6" evidence="1"/>
<dbReference type="EMBL" id="CP000628">
    <property type="protein sequence ID" value="ACM25702.1"/>
    <property type="molecule type" value="Genomic_DNA"/>
</dbReference>
<dbReference type="RefSeq" id="WP_007703701.1">
    <property type="nucleotide sequence ID" value="NC_011985.1"/>
</dbReference>
<dbReference type="SMR" id="B9JAL9"/>
<dbReference type="STRING" id="311403.Arad_1202"/>
<dbReference type="KEGG" id="ara:Arad_1202"/>
<dbReference type="eggNOG" id="COG1722">
    <property type="taxonomic scope" value="Bacteria"/>
</dbReference>
<dbReference type="HOGENOM" id="CLU_145918_0_3_5"/>
<dbReference type="Proteomes" id="UP000001600">
    <property type="component" value="Chromosome 1"/>
</dbReference>
<dbReference type="GO" id="GO:0005829">
    <property type="term" value="C:cytosol"/>
    <property type="evidence" value="ECO:0007669"/>
    <property type="project" value="TreeGrafter"/>
</dbReference>
<dbReference type="GO" id="GO:0009318">
    <property type="term" value="C:exodeoxyribonuclease VII complex"/>
    <property type="evidence" value="ECO:0007669"/>
    <property type="project" value="InterPro"/>
</dbReference>
<dbReference type="GO" id="GO:0008855">
    <property type="term" value="F:exodeoxyribonuclease VII activity"/>
    <property type="evidence" value="ECO:0007669"/>
    <property type="project" value="UniProtKB-UniRule"/>
</dbReference>
<dbReference type="GO" id="GO:0006308">
    <property type="term" value="P:DNA catabolic process"/>
    <property type="evidence" value="ECO:0007669"/>
    <property type="project" value="UniProtKB-UniRule"/>
</dbReference>
<dbReference type="Gene3D" id="1.10.287.1040">
    <property type="entry name" value="Exonuclease VII, small subunit"/>
    <property type="match status" value="1"/>
</dbReference>
<dbReference type="HAMAP" id="MF_00337">
    <property type="entry name" value="Exonuc_7_S"/>
    <property type="match status" value="1"/>
</dbReference>
<dbReference type="InterPro" id="IPR003761">
    <property type="entry name" value="Exonuc_VII_S"/>
</dbReference>
<dbReference type="InterPro" id="IPR037004">
    <property type="entry name" value="Exonuc_VII_ssu_sf"/>
</dbReference>
<dbReference type="NCBIfam" id="NF002139">
    <property type="entry name" value="PRK00977.1-3"/>
    <property type="match status" value="1"/>
</dbReference>
<dbReference type="NCBIfam" id="TIGR01280">
    <property type="entry name" value="xseB"/>
    <property type="match status" value="1"/>
</dbReference>
<dbReference type="PANTHER" id="PTHR34137">
    <property type="entry name" value="EXODEOXYRIBONUCLEASE 7 SMALL SUBUNIT"/>
    <property type="match status" value="1"/>
</dbReference>
<dbReference type="PANTHER" id="PTHR34137:SF1">
    <property type="entry name" value="EXODEOXYRIBONUCLEASE 7 SMALL SUBUNIT"/>
    <property type="match status" value="1"/>
</dbReference>
<dbReference type="Pfam" id="PF02609">
    <property type="entry name" value="Exonuc_VII_S"/>
    <property type="match status" value="1"/>
</dbReference>
<dbReference type="PIRSF" id="PIRSF006488">
    <property type="entry name" value="Exonuc_VII_S"/>
    <property type="match status" value="1"/>
</dbReference>
<dbReference type="SUPFAM" id="SSF116842">
    <property type="entry name" value="XseB-like"/>
    <property type="match status" value="1"/>
</dbReference>